<keyword id="KW-0963">Cytoplasm</keyword>
<keyword id="KW-0489">Methyltransferase</keyword>
<keyword id="KW-1185">Reference proteome</keyword>
<keyword id="KW-0698">rRNA processing</keyword>
<keyword id="KW-0949">S-adenosyl-L-methionine</keyword>
<keyword id="KW-0808">Transferase</keyword>
<protein>
    <recommendedName>
        <fullName evidence="1">Ribosomal RNA large subunit methyltransferase H</fullName>
        <ecNumber evidence="1">2.1.1.177</ecNumber>
    </recommendedName>
    <alternativeName>
        <fullName evidence="1">23S rRNA (pseudouridine1915-N3)-methyltransferase</fullName>
    </alternativeName>
    <alternativeName>
        <fullName evidence="1">23S rRNA m3Psi1915 methyltransferase</fullName>
    </alternativeName>
    <alternativeName>
        <fullName evidence="1">rRNA (pseudouridine-N3-)-methyltransferase RlmH</fullName>
    </alternativeName>
</protein>
<name>RLMH_BACLD</name>
<organism>
    <name type="scientific">Bacillus licheniformis (strain ATCC 14580 / DSM 13 / JCM 2505 / CCUG 7422 / NBRC 12200 / NCIMB 9375 / NCTC 10341 / NRRL NRS-1264 / Gibson 46)</name>
    <dbReference type="NCBI Taxonomy" id="279010"/>
    <lineage>
        <taxon>Bacteria</taxon>
        <taxon>Bacillati</taxon>
        <taxon>Bacillota</taxon>
        <taxon>Bacilli</taxon>
        <taxon>Bacillales</taxon>
        <taxon>Bacillaceae</taxon>
        <taxon>Bacillus</taxon>
    </lineage>
</organism>
<comment type="function">
    <text evidence="1">Specifically methylates the pseudouridine at position 1915 (m3Psi1915) in 23S rRNA.</text>
</comment>
<comment type="catalytic activity">
    <reaction evidence="1">
        <text>pseudouridine(1915) in 23S rRNA + S-adenosyl-L-methionine = N(3)-methylpseudouridine(1915) in 23S rRNA + S-adenosyl-L-homocysteine + H(+)</text>
        <dbReference type="Rhea" id="RHEA:42752"/>
        <dbReference type="Rhea" id="RHEA-COMP:10221"/>
        <dbReference type="Rhea" id="RHEA-COMP:10222"/>
        <dbReference type="ChEBI" id="CHEBI:15378"/>
        <dbReference type="ChEBI" id="CHEBI:57856"/>
        <dbReference type="ChEBI" id="CHEBI:59789"/>
        <dbReference type="ChEBI" id="CHEBI:65314"/>
        <dbReference type="ChEBI" id="CHEBI:74486"/>
        <dbReference type="EC" id="2.1.1.177"/>
    </reaction>
</comment>
<comment type="subunit">
    <text evidence="1">Homodimer.</text>
</comment>
<comment type="subcellular location">
    <subcellularLocation>
        <location evidence="1">Cytoplasm</location>
    </subcellularLocation>
</comment>
<comment type="similarity">
    <text evidence="1">Belongs to the RNA methyltransferase RlmH family.</text>
</comment>
<evidence type="ECO:0000255" key="1">
    <source>
        <dbReference type="HAMAP-Rule" id="MF_00658"/>
    </source>
</evidence>
<proteinExistence type="inferred from homology"/>
<sequence length="159" mass="17997">MNISIVAIGKLKEKYLKQGIDEYIKRLSAYAKVDIIELPDEKAPENLSDQDMKIVKDKEGERILSKISPDAHVIALAIEGKMKSSEELADNMDRLATYGKSKATFVIGGSLGLSDAVLKRADEKLSFSRMTFPHQLMRLILLEQVYRAFRINRGEPYHK</sequence>
<feature type="chain" id="PRO_0000198088" description="Ribosomal RNA large subunit methyltransferase H">
    <location>
        <begin position="1"/>
        <end position="159"/>
    </location>
</feature>
<feature type="binding site" evidence="1">
    <location>
        <position position="76"/>
    </location>
    <ligand>
        <name>S-adenosyl-L-methionine</name>
        <dbReference type="ChEBI" id="CHEBI:59789"/>
    </ligand>
</feature>
<feature type="binding site" evidence="1">
    <location>
        <position position="108"/>
    </location>
    <ligand>
        <name>S-adenosyl-L-methionine</name>
        <dbReference type="ChEBI" id="CHEBI:59789"/>
    </ligand>
</feature>
<feature type="binding site" evidence="1">
    <location>
        <begin position="127"/>
        <end position="132"/>
    </location>
    <ligand>
        <name>S-adenosyl-L-methionine</name>
        <dbReference type="ChEBI" id="CHEBI:59789"/>
    </ligand>
</feature>
<gene>
    <name evidence="1" type="primary">rlmH</name>
    <name type="ordered locus">BLi04324</name>
    <name type="ordered locus">BL02382</name>
</gene>
<reference key="1">
    <citation type="journal article" date="2004" name="J. Mol. Microbiol. Biotechnol.">
        <title>The complete genome sequence of Bacillus licheniformis DSM13, an organism with great industrial potential.</title>
        <authorList>
            <person name="Veith B."/>
            <person name="Herzberg C."/>
            <person name="Steckel S."/>
            <person name="Feesche J."/>
            <person name="Maurer K.H."/>
            <person name="Ehrenreich P."/>
            <person name="Baeumer S."/>
            <person name="Henne A."/>
            <person name="Liesegang H."/>
            <person name="Merkl R."/>
            <person name="Ehrenreich A."/>
            <person name="Gottschalk G."/>
        </authorList>
    </citation>
    <scope>NUCLEOTIDE SEQUENCE [LARGE SCALE GENOMIC DNA]</scope>
    <source>
        <strain>ATCC 14580 / DSM 13 / JCM 2505 / CCUG 7422 / NBRC 12200 / NCIMB 9375 / NCTC 10341 / NRRL NRS-1264 / Gibson 46</strain>
    </source>
</reference>
<reference key="2">
    <citation type="journal article" date="2004" name="Genome Biol.">
        <title>Complete genome sequence of the industrial bacterium Bacillus licheniformis and comparisons with closely related Bacillus species.</title>
        <authorList>
            <person name="Rey M.W."/>
            <person name="Ramaiya P."/>
            <person name="Nelson B.A."/>
            <person name="Brody-Karpin S.D."/>
            <person name="Zaretsky E.J."/>
            <person name="Tang M."/>
            <person name="Lopez de Leon A."/>
            <person name="Xiang H."/>
            <person name="Gusti V."/>
            <person name="Clausen I.G."/>
            <person name="Olsen P.B."/>
            <person name="Rasmussen M.D."/>
            <person name="Andersen J.T."/>
            <person name="Joergensen P.L."/>
            <person name="Larsen T.S."/>
            <person name="Sorokin A."/>
            <person name="Bolotin A."/>
            <person name="Lapidus A."/>
            <person name="Galleron N."/>
            <person name="Ehrlich S.D."/>
            <person name="Berka R.M."/>
        </authorList>
    </citation>
    <scope>NUCLEOTIDE SEQUENCE [LARGE SCALE GENOMIC DNA]</scope>
    <source>
        <strain>ATCC 14580 / DSM 13 / JCM 2505 / CCUG 7422 / NBRC 12200 / NCIMB 9375 / NCTC 10341 / NRRL NRS-1264 / Gibson 46</strain>
    </source>
</reference>
<dbReference type="EC" id="2.1.1.177" evidence="1"/>
<dbReference type="EMBL" id="AE017333">
    <property type="protein sequence ID" value="AAU43136.1"/>
    <property type="molecule type" value="Genomic_DNA"/>
</dbReference>
<dbReference type="EMBL" id="CP000002">
    <property type="protein sequence ID" value="AAU25755.1"/>
    <property type="molecule type" value="Genomic_DNA"/>
</dbReference>
<dbReference type="RefSeq" id="WP_011198489.1">
    <property type="nucleotide sequence ID" value="NC_006322.1"/>
</dbReference>
<dbReference type="SMR" id="Q65CS8"/>
<dbReference type="STRING" id="279010.BL02382"/>
<dbReference type="GeneID" id="92859106"/>
<dbReference type="KEGG" id="bld:BLi04324"/>
<dbReference type="KEGG" id="bli:BL02382"/>
<dbReference type="eggNOG" id="COG1576">
    <property type="taxonomic scope" value="Bacteria"/>
</dbReference>
<dbReference type="HOGENOM" id="CLU_100552_0_0_9"/>
<dbReference type="Proteomes" id="UP000000606">
    <property type="component" value="Chromosome"/>
</dbReference>
<dbReference type="GO" id="GO:0005737">
    <property type="term" value="C:cytoplasm"/>
    <property type="evidence" value="ECO:0007669"/>
    <property type="project" value="UniProtKB-SubCell"/>
</dbReference>
<dbReference type="GO" id="GO:0070038">
    <property type="term" value="F:rRNA (pseudouridine-N3-)-methyltransferase activity"/>
    <property type="evidence" value="ECO:0007669"/>
    <property type="project" value="UniProtKB-UniRule"/>
</dbReference>
<dbReference type="CDD" id="cd18081">
    <property type="entry name" value="RlmH-like"/>
    <property type="match status" value="1"/>
</dbReference>
<dbReference type="Gene3D" id="3.40.1280.10">
    <property type="match status" value="1"/>
</dbReference>
<dbReference type="HAMAP" id="MF_00658">
    <property type="entry name" value="23SrRNA_methyltr_H"/>
    <property type="match status" value="1"/>
</dbReference>
<dbReference type="InterPro" id="IPR029028">
    <property type="entry name" value="Alpha/beta_knot_MTases"/>
</dbReference>
<dbReference type="InterPro" id="IPR003742">
    <property type="entry name" value="RlmH-like"/>
</dbReference>
<dbReference type="InterPro" id="IPR029026">
    <property type="entry name" value="tRNA_m1G_MTases_N"/>
</dbReference>
<dbReference type="NCBIfam" id="NF000985">
    <property type="entry name" value="PRK00103.1-3"/>
    <property type="match status" value="1"/>
</dbReference>
<dbReference type="NCBIfam" id="TIGR00246">
    <property type="entry name" value="tRNA_RlmH_YbeA"/>
    <property type="match status" value="1"/>
</dbReference>
<dbReference type="PANTHER" id="PTHR33603">
    <property type="entry name" value="METHYLTRANSFERASE"/>
    <property type="match status" value="1"/>
</dbReference>
<dbReference type="PANTHER" id="PTHR33603:SF1">
    <property type="entry name" value="RIBOSOMAL RNA LARGE SUBUNIT METHYLTRANSFERASE H"/>
    <property type="match status" value="1"/>
</dbReference>
<dbReference type="Pfam" id="PF02590">
    <property type="entry name" value="SPOUT_MTase"/>
    <property type="match status" value="1"/>
</dbReference>
<dbReference type="PIRSF" id="PIRSF004505">
    <property type="entry name" value="MT_bac"/>
    <property type="match status" value="1"/>
</dbReference>
<dbReference type="SUPFAM" id="SSF75217">
    <property type="entry name" value="alpha/beta knot"/>
    <property type="match status" value="1"/>
</dbReference>
<accession>Q65CS8</accession>
<accession>Q62NA6</accession>